<gene>
    <name evidence="5" type="ORF">OCC_10945</name>
</gene>
<feature type="chain" id="PRO_0000458673" description="Leucine/methionine racemase">
    <location>
        <begin position="1"/>
        <end position="443"/>
    </location>
</feature>
<feature type="binding site" evidence="1">
    <location>
        <begin position="110"/>
        <end position="111"/>
    </location>
    <ligand>
        <name>pyridoxal 5'-phosphate</name>
        <dbReference type="ChEBI" id="CHEBI:597326"/>
    </ligand>
</feature>
<feature type="binding site" evidence="1">
    <location>
        <position position="247"/>
    </location>
    <ligand>
        <name>pyridoxal 5'-phosphate</name>
        <dbReference type="ChEBI" id="CHEBI:597326"/>
    </ligand>
</feature>
<feature type="binding site" evidence="1">
    <location>
        <position position="302"/>
    </location>
    <ligand>
        <name>pyridoxal 5'-phosphate</name>
        <dbReference type="ChEBI" id="CHEBI:597326"/>
    </ligand>
</feature>
<feature type="modified residue" description="N6-(pyridoxal phosphate)lysine" evidence="1">
    <location>
        <position position="273"/>
    </location>
</feature>
<comment type="function">
    <text evidence="2">Amino acid racemase with moderate substrate specificity (PubMed:33942867). Is primarily active toward leucine, which is the preferred substrate, and methionine (PubMed:33942867). Also exhibits lower levels of activity toward phenylalanine, alanine and serine (PubMed:33942867).</text>
</comment>
<comment type="catalytic activity">
    <reaction evidence="2">
        <text>L-leucine = D-leucine</text>
        <dbReference type="Rhea" id="RHEA:59396"/>
        <dbReference type="ChEBI" id="CHEBI:57427"/>
        <dbReference type="ChEBI" id="CHEBI:143079"/>
    </reaction>
</comment>
<comment type="catalytic activity">
    <reaction evidence="2">
        <text>L-methionine = D-methionine</text>
        <dbReference type="Rhea" id="RHEA:12492"/>
        <dbReference type="ChEBI" id="CHEBI:57844"/>
        <dbReference type="ChEBI" id="CHEBI:57932"/>
        <dbReference type="EC" id="5.1.1.2"/>
    </reaction>
</comment>
<comment type="cofactor">
    <cofactor evidence="2">
        <name>pyridoxal 5'-phosphate</name>
        <dbReference type="ChEBI" id="CHEBI:597326"/>
    </cofactor>
</comment>
<comment type="activity regulation">
    <text evidence="2">Activity is strongly inhibited by several metal ions, including Co(2+), Zn(2+), Ni(2+), Cu(2+) and Fe(3+), and nonsubstrate amino acids such as L-arginine and L-lysine (PubMed:33942867). Activity is completely abolished in the presence of hydroxylamine, an inhibitor of pyridoxal phosphate-dependent enzymes (PubMed:33942867).</text>
</comment>
<comment type="biophysicochemical properties">
    <kinetics>
        <KM evidence="2">28 uM for pyridoxal phosphate</KM>
        <KM evidence="2">2.3 mM for L-leucine</KM>
        <KM evidence="2">1.8 mM for D-leucine</KM>
        <KM evidence="2">6.7 mM for L-methionine</KM>
        <KM evidence="2">12 mM for D-methionine</KM>
        <text evidence="2">kcat is 0.62 sec(-1) with L-leucine as substrate. kcat is 0.79 sec(-1) with D-leucine as substrate. kcat is 1.1 sec(-1) with L-methionine as substrate. kcat is 1.8 sec(-1) with D-methionine as substrate.</text>
    </kinetics>
    <temperatureDependence>
        <text evidence="2">Optimum temperature is 70-80 degrees Celsius.</text>
    </temperatureDependence>
</comment>
<comment type="similarity">
    <text evidence="4">Belongs to the class-III pyridoxal-phosphate-dependent aminotransferase family.</text>
</comment>
<dbReference type="EC" id="5.1.1.-" evidence="2"/>
<dbReference type="EC" id="5.1.1.2" evidence="2"/>
<dbReference type="EMBL" id="CP006670">
    <property type="protein sequence ID" value="EHR77615.1"/>
    <property type="molecule type" value="Genomic_DNA"/>
</dbReference>
<dbReference type="RefSeq" id="WP_004069959.1">
    <property type="nucleotide sequence ID" value="NC_022084.1"/>
</dbReference>
<dbReference type="SMR" id="H3ZR39"/>
<dbReference type="STRING" id="523849.OCC_10945"/>
<dbReference type="PaxDb" id="523849-OCC_10945"/>
<dbReference type="GeneID" id="16549451"/>
<dbReference type="KEGG" id="tlt:OCC_10945"/>
<dbReference type="HOGENOM" id="CLU_016922_10_0_2"/>
<dbReference type="OrthoDB" id="6534at2157"/>
<dbReference type="Proteomes" id="UP000015502">
    <property type="component" value="Chromosome"/>
</dbReference>
<dbReference type="GO" id="GO:0042802">
    <property type="term" value="F:identical protein binding"/>
    <property type="evidence" value="ECO:0007669"/>
    <property type="project" value="TreeGrafter"/>
</dbReference>
<dbReference type="GO" id="GO:0016853">
    <property type="term" value="F:isomerase activity"/>
    <property type="evidence" value="ECO:0007669"/>
    <property type="project" value="UniProtKB-KW"/>
</dbReference>
<dbReference type="GO" id="GO:0030170">
    <property type="term" value="F:pyridoxal phosphate binding"/>
    <property type="evidence" value="ECO:0007669"/>
    <property type="project" value="InterPro"/>
</dbReference>
<dbReference type="GO" id="GO:0008483">
    <property type="term" value="F:transaminase activity"/>
    <property type="evidence" value="ECO:0007669"/>
    <property type="project" value="InterPro"/>
</dbReference>
<dbReference type="CDD" id="cd00610">
    <property type="entry name" value="OAT_like"/>
    <property type="match status" value="1"/>
</dbReference>
<dbReference type="FunFam" id="3.40.640.10:FF:000004">
    <property type="entry name" value="Acetylornithine aminotransferase"/>
    <property type="match status" value="1"/>
</dbReference>
<dbReference type="Gene3D" id="3.90.1150.10">
    <property type="entry name" value="Aspartate Aminotransferase, domain 1"/>
    <property type="match status" value="1"/>
</dbReference>
<dbReference type="Gene3D" id="3.40.640.10">
    <property type="entry name" value="Type I PLP-dependent aspartate aminotransferase-like (Major domain)"/>
    <property type="match status" value="1"/>
</dbReference>
<dbReference type="InterPro" id="IPR005814">
    <property type="entry name" value="Aminotrans_3"/>
</dbReference>
<dbReference type="InterPro" id="IPR049704">
    <property type="entry name" value="Aminotrans_3_PPA_site"/>
</dbReference>
<dbReference type="InterPro" id="IPR050103">
    <property type="entry name" value="Class-III_PLP-dep_AT"/>
</dbReference>
<dbReference type="InterPro" id="IPR054934">
    <property type="entry name" value="LeuMetRace"/>
</dbReference>
<dbReference type="InterPro" id="IPR015424">
    <property type="entry name" value="PyrdxlP-dep_Trfase"/>
</dbReference>
<dbReference type="InterPro" id="IPR015421">
    <property type="entry name" value="PyrdxlP-dep_Trfase_major"/>
</dbReference>
<dbReference type="InterPro" id="IPR015422">
    <property type="entry name" value="PyrdxlP-dep_Trfase_small"/>
</dbReference>
<dbReference type="NCBIfam" id="NF045634">
    <property type="entry name" value="LeuMetRace"/>
    <property type="match status" value="1"/>
</dbReference>
<dbReference type="NCBIfam" id="NF006228">
    <property type="entry name" value="PRK08360.1"/>
    <property type="match status" value="1"/>
</dbReference>
<dbReference type="PANTHER" id="PTHR11986">
    <property type="entry name" value="AMINOTRANSFERASE CLASS III"/>
    <property type="match status" value="1"/>
</dbReference>
<dbReference type="PANTHER" id="PTHR11986:SF58">
    <property type="entry name" value="LEUCINE_METHIONINE RACEMASE"/>
    <property type="match status" value="1"/>
</dbReference>
<dbReference type="Pfam" id="PF00202">
    <property type="entry name" value="Aminotran_3"/>
    <property type="match status" value="1"/>
</dbReference>
<dbReference type="PIRSF" id="PIRSF000521">
    <property type="entry name" value="Transaminase_4ab_Lys_Orn"/>
    <property type="match status" value="1"/>
</dbReference>
<dbReference type="SUPFAM" id="SSF53383">
    <property type="entry name" value="PLP-dependent transferases"/>
    <property type="match status" value="1"/>
</dbReference>
<dbReference type="PROSITE" id="PS00600">
    <property type="entry name" value="AA_TRANSFER_CLASS_3"/>
    <property type="match status" value="1"/>
</dbReference>
<sequence length="443" mass="49460">MRKEEIIERYSRIFPKASRVTYAPIVAVKAKNAKVWDIEEREYIDFLSDAAVQNVGHNNEKVVKAIKEQAERLIHFTFIYGFTLEPLLLAEKLAEISPIEEPKIAFGLSGSDANDGAIKFARAYTKRRTLLSYLKSYYGSTYGASSITGLDFHVRALVGELSDVHYIPYPDCYRCPFGKERNSCKMECVEYIKAKFEGEVYADGVAALFAEPIQGDAGMVVPPEDYFKRVKRILDEHGILLAVDEVQSGLGRTGKWFAIEHFGVKPDIITVAKPLGGGLPISAVVGRAEIMDSLPPLGHAFTLIGNPVASRAALAVIEEIEEKDLLKRAEKLGSYAMKRLGKMKEEYELIGDVRGKGLMIGVDLVKDRETKERAYDEAKKVVWRAYELGLIVAFLQGNVLRIQPPLTIEKETLDEGLDKLERAIADVEEGRVGDEALKFVHGW</sequence>
<proteinExistence type="evidence at protein level"/>
<name>LMRAC_THELN</name>
<evidence type="ECO:0000250" key="1">
    <source>
        <dbReference type="UniProtKB" id="P22256"/>
    </source>
</evidence>
<evidence type="ECO:0000269" key="2">
    <source>
    </source>
</evidence>
<evidence type="ECO:0000303" key="3">
    <source>
    </source>
</evidence>
<evidence type="ECO:0000305" key="4"/>
<evidence type="ECO:0000312" key="5">
    <source>
        <dbReference type="EMBL" id="EHR77615.1"/>
    </source>
</evidence>
<accession>H3ZR39</accession>
<reference key="1">
    <citation type="journal article" date="2012" name="J. Bacteriol.">
        <title>Genome sequence of the model hyperthermophilic archaeon Thermococcus litoralis NS-C.</title>
        <authorList>
            <person name="Gardner A.F."/>
            <person name="Kumar S."/>
            <person name="Perler F.B."/>
        </authorList>
    </citation>
    <scope>NUCLEOTIDE SEQUENCE [LARGE SCALE GENOMIC DNA]</scope>
    <source>
        <strain>ATCC 51850 / DSM 5473 / JCM 8560 / NS-C</strain>
    </source>
</reference>
<reference key="2">
    <citation type="journal article" date="2021" name="Biosci. Biotechnol. Biochem.">
        <title>Characterization of a novel moderate-substrate specificity amino acid racemase from the hyperthermophilic archaeon Thermococcus litoralis.</title>
        <authorList>
            <person name="Kawakami R."/>
            <person name="Kinoshita C."/>
            <person name="Kawase T."/>
            <person name="Sato M."/>
            <person name="Hayashi J."/>
            <person name="Sakuraba H."/>
            <person name="Ohshima T."/>
        </authorList>
    </citation>
    <scope>FUNCTION</scope>
    <scope>CATALYTIC ACTIVITY</scope>
    <scope>COFACTOR</scope>
    <scope>ACTIVITY REGULATION</scope>
    <scope>BIOPHYSICOCHEMICAL PROPERTIES</scope>
    <source>
        <strain>ATCC 51850 / DSM 5473 / JCM 8560 / NS-C</strain>
    </source>
</reference>
<protein>
    <recommendedName>
        <fullName evidence="4">Leucine/methionine racemase</fullName>
        <shortName evidence="4">Leu/Met racemase</shortName>
        <ecNumber evidence="2">5.1.1.-</ecNumber>
        <ecNumber evidence="2">5.1.1.2</ecNumber>
    </recommendedName>
    <alternativeName>
        <fullName evidence="3">Moderate-substrate specificity amino acid racemase</fullName>
        <shortName evidence="3">MAR</shortName>
    </alternativeName>
</protein>
<keyword id="KW-0413">Isomerase</keyword>
<keyword id="KW-0663">Pyridoxal phosphate</keyword>
<organism>
    <name type="scientific">Thermococcus litoralis (strain ATCC 51850 / DSM 5473 / JCM 8560 / NS-C)</name>
    <dbReference type="NCBI Taxonomy" id="523849"/>
    <lineage>
        <taxon>Archaea</taxon>
        <taxon>Methanobacteriati</taxon>
        <taxon>Methanobacteriota</taxon>
        <taxon>Thermococci</taxon>
        <taxon>Thermococcales</taxon>
        <taxon>Thermococcaceae</taxon>
        <taxon>Thermococcus</taxon>
    </lineage>
</organism>